<dbReference type="EMBL" id="U67194">
    <property type="protein sequence ID" value="AAC64427.1"/>
    <property type="molecule type" value="Genomic_DNA"/>
</dbReference>
<dbReference type="RefSeq" id="WP_000041932.1">
    <property type="nucleotide sequence ID" value="NZ_JBEEEK010000035.1"/>
</dbReference>
<dbReference type="SMR" id="Q52278"/>
<dbReference type="GeneID" id="93083064"/>
<dbReference type="InterPro" id="IPR035338">
    <property type="entry name" value="KleA/KleC-like"/>
</dbReference>
<dbReference type="Pfam" id="PF17383">
    <property type="entry name" value="kleA_kleC"/>
    <property type="match status" value="1"/>
</dbReference>
<sequence length="78" mass="8642">MSKNKIMPWVDALPNVEATDFQARRDQIEATMAEAAELVKQAEELRGKAYFAALSLEASAKGEWSSQAVEQAKRSVGW</sequence>
<feature type="chain" id="PRO_0000068365" description="Protein KleA">
    <location>
        <begin position="1"/>
        <end position="78"/>
    </location>
</feature>
<comment type="similarity">
    <text evidence="1">To E.coli KleC (kcrB1).</text>
</comment>
<protein>
    <recommendedName>
        <fullName>Protein KleA</fullName>
    </recommendedName>
    <alternativeName>
        <fullName>KcrA1 protein</fullName>
    </alternativeName>
</protein>
<keyword id="KW-0614">Plasmid</keyword>
<evidence type="ECO:0000305" key="1"/>
<proteinExistence type="predicted"/>
<reference key="1">
    <citation type="journal article" date="1995" name="Microbiology">
        <title>Evolution of the korA-oriV segment of promiscuous IncP plasmids.</title>
        <authorList>
            <person name="Thomas C.M."/>
            <person name="Smith C.A."/>
            <person name="Ibbotson J.P."/>
            <person name="Johnston L."/>
            <person name="Wang N."/>
        </authorList>
    </citation>
    <scope>NUCLEOTIDE SEQUENCE [GENOMIC DNA]</scope>
</reference>
<accession>Q52278</accession>
<gene>
    <name type="primary">kleA</name>
    <name type="synonym">kcrA1</name>
</gene>
<geneLocation type="plasmid">
    <name>IncP-beta R751</name>
</geneLocation>
<organism>
    <name type="scientific">Escherichia coli</name>
    <dbReference type="NCBI Taxonomy" id="562"/>
    <lineage>
        <taxon>Bacteria</taxon>
        <taxon>Pseudomonadati</taxon>
        <taxon>Pseudomonadota</taxon>
        <taxon>Gammaproteobacteria</taxon>
        <taxon>Enterobacterales</taxon>
        <taxon>Enterobacteriaceae</taxon>
        <taxon>Escherichia</taxon>
    </lineage>
</organism>
<name>KLEA1_ECOLX</name>